<protein>
    <recommendedName>
        <fullName>Putative ribonuclease VapC34</fullName>
        <shortName>Putative RNase VapC34</shortName>
        <ecNumber>3.1.-.-</ecNumber>
    </recommendedName>
    <alternativeName>
        <fullName>Toxin VapC34</fullName>
    </alternativeName>
</protein>
<reference key="1">
    <citation type="journal article" date="2002" name="J. Bacteriol.">
        <title>Whole-genome comparison of Mycobacterium tuberculosis clinical and laboratory strains.</title>
        <authorList>
            <person name="Fleischmann R.D."/>
            <person name="Alland D."/>
            <person name="Eisen J.A."/>
            <person name="Carpenter L."/>
            <person name="White O."/>
            <person name="Peterson J.D."/>
            <person name="DeBoy R.T."/>
            <person name="Dodson R.J."/>
            <person name="Gwinn M.L."/>
            <person name="Haft D.H."/>
            <person name="Hickey E.K."/>
            <person name="Kolonay J.F."/>
            <person name="Nelson W.C."/>
            <person name="Umayam L.A."/>
            <person name="Ermolaeva M.D."/>
            <person name="Salzberg S.L."/>
            <person name="Delcher A."/>
            <person name="Utterback T.R."/>
            <person name="Weidman J.F."/>
            <person name="Khouri H.M."/>
            <person name="Gill J."/>
            <person name="Mikula A."/>
            <person name="Bishai W."/>
            <person name="Jacobs W.R. Jr."/>
            <person name="Venter J.C."/>
            <person name="Fraser C.M."/>
        </authorList>
    </citation>
    <scope>NUCLEOTIDE SEQUENCE [LARGE SCALE GENOMIC DNA]</scope>
    <source>
        <strain>CDC 1551 / Oshkosh</strain>
    </source>
</reference>
<evidence type="ECO:0000250" key="1"/>
<evidence type="ECO:0000255" key="2"/>
<evidence type="ECO:0000305" key="3"/>
<name>VPC34_MYCTO</name>
<sequence length="82" mass="8884">MVIDTSALVAMLNDEPEAQRFEIAVAADHVWLMSTASYPEMATVIETRFGEPGGREPKVSGQPLLYKGDDFACIDIRAVLAG</sequence>
<feature type="chain" id="PRO_0000428590" description="Putative ribonuclease VapC34">
    <location>
        <begin position="1"/>
        <end position="82"/>
    </location>
</feature>
<feature type="binding site" evidence="2">
    <location>
        <position position="4"/>
    </location>
    <ligand>
        <name>Mg(2+)</name>
        <dbReference type="ChEBI" id="CHEBI:18420"/>
    </ligand>
</feature>
<organism>
    <name type="scientific">Mycobacterium tuberculosis (strain CDC 1551 / Oshkosh)</name>
    <dbReference type="NCBI Taxonomy" id="83331"/>
    <lineage>
        <taxon>Bacteria</taxon>
        <taxon>Bacillati</taxon>
        <taxon>Actinomycetota</taxon>
        <taxon>Actinomycetes</taxon>
        <taxon>Mycobacteriales</taxon>
        <taxon>Mycobacteriaceae</taxon>
        <taxon>Mycobacterium</taxon>
        <taxon>Mycobacterium tuberculosis complex</taxon>
    </lineage>
</organism>
<comment type="function">
    <text evidence="1">Toxic component of a possible type II toxin-antitoxin (TA) system. A putative RNase. Its cognate antitoxin is VapB34 (By similarity).</text>
</comment>
<comment type="cofactor">
    <cofactor evidence="3">
        <name>Mg(2+)</name>
        <dbReference type="ChEBI" id="CHEBI:18420"/>
    </cofactor>
</comment>
<comment type="similarity">
    <text evidence="3">Belongs to the PINc/VapC protein family.</text>
</comment>
<proteinExistence type="inferred from homology"/>
<accession>P9WF70</accession>
<accession>L0T7S5</accession>
<accession>O08148</accession>
<accession>P71999</accession>
<accession>Q7D817</accession>
<gene>
    <name type="primary">vapC34</name>
    <name type="ordered locus">MT1783</name>
</gene>
<keyword id="KW-0378">Hydrolase</keyword>
<keyword id="KW-0460">Magnesium</keyword>
<keyword id="KW-0479">Metal-binding</keyword>
<keyword id="KW-0540">Nuclease</keyword>
<keyword id="KW-1185">Reference proteome</keyword>
<keyword id="KW-1277">Toxin-antitoxin system</keyword>
<dbReference type="EC" id="3.1.-.-"/>
<dbReference type="EMBL" id="AE000516">
    <property type="protein sequence ID" value="AAK46056.1"/>
    <property type="molecule type" value="Genomic_DNA"/>
</dbReference>
<dbReference type="PIR" id="F70985">
    <property type="entry name" value="F70985"/>
</dbReference>
<dbReference type="RefSeq" id="WP_003898996.1">
    <property type="nucleotide sequence ID" value="NZ_KK341227.1"/>
</dbReference>
<dbReference type="SMR" id="P9WF70"/>
<dbReference type="KEGG" id="mtc:MT1783"/>
<dbReference type="PATRIC" id="fig|83331.31.peg.1913"/>
<dbReference type="HOGENOM" id="CLU_194525_0_0_11"/>
<dbReference type="Proteomes" id="UP000001020">
    <property type="component" value="Chromosome"/>
</dbReference>
<dbReference type="GO" id="GO:0046872">
    <property type="term" value="F:metal ion binding"/>
    <property type="evidence" value="ECO:0007669"/>
    <property type="project" value="UniProtKB-KW"/>
</dbReference>
<dbReference type="GO" id="GO:0004518">
    <property type="term" value="F:nuclease activity"/>
    <property type="evidence" value="ECO:0007669"/>
    <property type="project" value="UniProtKB-KW"/>
</dbReference>
<dbReference type="CDD" id="cd09871">
    <property type="entry name" value="PIN_MtVapC28-VapC30-like"/>
    <property type="match status" value="1"/>
</dbReference>
<dbReference type="Gene3D" id="3.40.50.1010">
    <property type="entry name" value="5'-nuclease"/>
    <property type="match status" value="1"/>
</dbReference>
<dbReference type="InterPro" id="IPR029060">
    <property type="entry name" value="PIN-like_dom_sf"/>
</dbReference>
<dbReference type="InterPro" id="IPR002716">
    <property type="entry name" value="PIN_dom"/>
</dbReference>
<dbReference type="Pfam" id="PF01850">
    <property type="entry name" value="PIN"/>
    <property type="match status" value="1"/>
</dbReference>
<dbReference type="SUPFAM" id="SSF88723">
    <property type="entry name" value="PIN domain-like"/>
    <property type="match status" value="1"/>
</dbReference>